<organismHost>
    <name type="scientific">Myotis mystacinus</name>
    <name type="common">Whiskered bat</name>
    <dbReference type="NCBI Taxonomy" id="109479"/>
</organismHost>
<protein>
    <recommendedName>
        <fullName>Phosphoprotein</fullName>
        <shortName>Protein P</shortName>
    </recommendedName>
    <alternativeName>
        <fullName>Protein M1</fullName>
    </alternativeName>
</protein>
<reference key="1">
    <citation type="journal article" date="2003" name="Virus Res.">
        <title>Bat lyssaviruses (Aravan and Khujand) from Central Asia: phylogenetic relationships according to N, P and G gene sequences.</title>
        <authorList>
            <person name="Kuzmin I.V."/>
            <person name="Orciari L.A."/>
            <person name="Arai Y.T."/>
            <person name="Smith J.S."/>
            <person name="Hanlon C.A."/>
            <person name="Kameoka Y."/>
            <person name="Rupprecht C.E."/>
        </authorList>
    </citation>
    <scope>NUCLEOTIDE SEQUENCE [GENOMIC RNA]</scope>
</reference>
<reference key="2">
    <citation type="journal article" date="2008" name="Virus Res.">
        <title>Complete genomes of Aravan, Khujand, Irkut and West Caucasian bat viruses, with special attention to the polymerase gene and non-coding regions.</title>
        <authorList>
            <person name="Kuzmin I.V."/>
            <person name="Wu X."/>
            <person name="Tordo N."/>
            <person name="Rupprecht C.E."/>
        </authorList>
    </citation>
    <scope>NUCLEOTIDE SEQUENCE [GENOMIC RNA]</scope>
</reference>
<keyword id="KW-0024">Alternative initiation</keyword>
<keyword id="KW-0143">Chaperone</keyword>
<keyword id="KW-1035">Host cytoplasm</keyword>
<keyword id="KW-1048">Host nucleus</keyword>
<keyword id="KW-0945">Host-virus interaction</keyword>
<keyword id="KW-1090">Inhibition of host innate immune response by virus</keyword>
<keyword id="KW-1114">Inhibition of host interferon signaling pathway by virus</keyword>
<keyword id="KW-1105">Inhibition of host STAT1 by virus</keyword>
<keyword id="KW-1106">Inhibition of host STAT2 by virus</keyword>
<keyword id="KW-0922">Interferon antiviral system evasion</keyword>
<keyword id="KW-0597">Phosphoprotein</keyword>
<keyword id="KW-0899">Viral immunoevasion</keyword>
<keyword id="KW-0693">Viral RNA replication</keyword>
<keyword id="KW-0946">Virion</keyword>
<evidence type="ECO:0000250" key="1"/>
<evidence type="ECO:0000256" key="2">
    <source>
        <dbReference type="SAM" id="MobiDB-lite"/>
    </source>
</evidence>
<evidence type="ECO:0000305" key="3"/>
<proteinExistence type="inferred from homology"/>
<accession>Q6X1D3</accession>
<organism>
    <name type="scientific">Khujand virus</name>
    <name type="common">KHUV</name>
    <dbReference type="NCBI Taxonomy" id="237716"/>
    <lineage>
        <taxon>Viruses</taxon>
        <taxon>Riboviria</taxon>
        <taxon>Orthornavirae</taxon>
        <taxon>Negarnaviricota</taxon>
        <taxon>Haploviricotina</taxon>
        <taxon>Monjiviricetes</taxon>
        <taxon>Mononegavirales</taxon>
        <taxon>Rhabdoviridae</taxon>
        <taxon>Alpharhabdovirinae</taxon>
        <taxon>Lyssavirus</taxon>
    </lineage>
</organism>
<comment type="function">
    <text evidence="1">Non catalytic polymerase cofactor and regulatory protein that plays a role in viral transcription and replication. Stabilizes the RNA polymerase L to the N-RNA template and binds the soluble protein N, preventing it from encapsidating non-genomic RNA. Also inhibits host IFN-alpha and IFN-beta signaling by binding and retaining phosphorylated STAT1 in the cytoplasm or by inhibiting the DNA binding of STAT1 in the nucleus (By similarity).</text>
</comment>
<comment type="subunit">
    <text evidence="1">Homotrimer when phosphorylated. This trimer is stabilized by binding to the L protein. Binds soluble protein N, and ribonucleocapsid. Interacts with host STAT1, STAT2 and PML (By similarity).</text>
</comment>
<comment type="subcellular location">
    <molecule>Phosphoprotein</molecule>
    <subcellularLocation>
        <location>Virion</location>
    </subcellularLocation>
    <subcellularLocation>
        <location evidence="1">Host cytoplasm</location>
    </subcellularLocation>
</comment>
<comment type="subcellular location">
    <molecule>Isoform P2</molecule>
    <subcellularLocation>
        <location evidence="1">Host cytoplasm</location>
    </subcellularLocation>
</comment>
<comment type="subcellular location">
    <molecule>Isoform P3</molecule>
    <subcellularLocation>
        <location evidence="1">Host nucleus</location>
    </subcellularLocation>
</comment>
<comment type="subcellular location">
    <molecule>Isoform P5</molecule>
    <subcellularLocation>
        <location evidence="1">Host nucleus</location>
    </subcellularLocation>
</comment>
<comment type="alternative products">
    <event type="alternative initiation"/>
    <isoform>
        <id>Q6X1D3-1</id>
        <name>P</name>
        <sequence type="displayed"/>
    </isoform>
    <isoform>
        <id>Q6X1D3-2</id>
        <name>P2</name>
        <sequence type="described" ref="VSP_026895"/>
    </isoform>
    <isoform>
        <id>Q6X1D3-3</id>
        <name>P3</name>
        <sequence type="described" ref="VSP_026894"/>
    </isoform>
    <isoform>
        <id>Q6X1D3-4</id>
        <name>P5</name>
        <sequence type="described" ref="VSP_026893"/>
    </isoform>
</comment>
<comment type="PTM">
    <text evidence="1">Phosphorylated by host PKC and by an unknown kinase.</text>
</comment>
<comment type="similarity">
    <text evidence="3">Belongs to the lyssavirus protein P family.</text>
</comment>
<dbReference type="EMBL" id="EF614261">
    <property type="protein sequence ID" value="AAP86777.1"/>
    <property type="molecule type" value="Genomic_RNA"/>
</dbReference>
<dbReference type="RefSeq" id="YP_009094328.1">
    <molecule id="Q6X1D3-1"/>
    <property type="nucleotide sequence ID" value="NC_025385.1"/>
</dbReference>
<dbReference type="SMR" id="Q6X1D3"/>
<dbReference type="GeneID" id="21011768"/>
<dbReference type="KEGG" id="vg:21011768"/>
<dbReference type="OrthoDB" id="6918at10239"/>
<dbReference type="Proteomes" id="UP000136780">
    <property type="component" value="Genome"/>
</dbReference>
<dbReference type="GO" id="GO:0030430">
    <property type="term" value="C:host cell cytoplasm"/>
    <property type="evidence" value="ECO:0007669"/>
    <property type="project" value="UniProtKB-SubCell"/>
</dbReference>
<dbReference type="GO" id="GO:0042025">
    <property type="term" value="C:host cell nucleus"/>
    <property type="evidence" value="ECO:0007669"/>
    <property type="project" value="UniProtKB-SubCell"/>
</dbReference>
<dbReference type="GO" id="GO:0044423">
    <property type="term" value="C:virion component"/>
    <property type="evidence" value="ECO:0007669"/>
    <property type="project" value="UniProtKB-KW"/>
</dbReference>
<dbReference type="GO" id="GO:0003968">
    <property type="term" value="F:RNA-directed RNA polymerase activity"/>
    <property type="evidence" value="ECO:0007669"/>
    <property type="project" value="InterPro"/>
</dbReference>
<dbReference type="GO" id="GO:0052170">
    <property type="term" value="P:symbiont-mediated suppression of host innate immune response"/>
    <property type="evidence" value="ECO:0007669"/>
    <property type="project" value="UniProtKB-KW"/>
</dbReference>
<dbReference type="GO" id="GO:0039563">
    <property type="term" value="P:symbiont-mediated suppression of host JAK-STAT cascade via inhibition of STAT1 activity"/>
    <property type="evidence" value="ECO:0007669"/>
    <property type="project" value="UniProtKB-KW"/>
</dbReference>
<dbReference type="GO" id="GO:0039564">
    <property type="term" value="P:symbiont-mediated suppression of host JAK-STAT cascade via inhibition of STAT2 activity"/>
    <property type="evidence" value="ECO:0007669"/>
    <property type="project" value="UniProtKB-KW"/>
</dbReference>
<dbReference type="GO" id="GO:0039502">
    <property type="term" value="P:symbiont-mediated suppression of host type I interferon-mediated signaling pathway"/>
    <property type="evidence" value="ECO:0007669"/>
    <property type="project" value="UniProtKB-KW"/>
</dbReference>
<dbReference type="GO" id="GO:0019083">
    <property type="term" value="P:viral transcription"/>
    <property type="evidence" value="ECO:0007669"/>
    <property type="project" value="InterPro"/>
</dbReference>
<dbReference type="CDD" id="cd21032">
    <property type="entry name" value="RABV_P-protein-C_like"/>
    <property type="match status" value="1"/>
</dbReference>
<dbReference type="Gene3D" id="6.10.140.1560">
    <property type="match status" value="1"/>
</dbReference>
<dbReference type="Gene3D" id="1.20.120.820">
    <property type="entry name" value="Phosphoprotein, C-terminal domain"/>
    <property type="match status" value="1"/>
</dbReference>
<dbReference type="InterPro" id="IPR004259">
    <property type="entry name" value="PP_M1-like"/>
</dbReference>
<dbReference type="InterPro" id="IPR037199">
    <property type="entry name" value="PP_M1_C"/>
</dbReference>
<dbReference type="InterPro" id="IPR049506">
    <property type="entry name" value="RABV_P-like_C"/>
</dbReference>
<dbReference type="Pfam" id="PF03012">
    <property type="entry name" value="PP_M1"/>
    <property type="match status" value="1"/>
</dbReference>
<dbReference type="SUPFAM" id="SSF118173">
    <property type="entry name" value="Phosphoprotein M1, C-terminal domain"/>
    <property type="match status" value="1"/>
</dbReference>
<feature type="chain" id="PRO_0000295248" description="Phosphoprotein">
    <location>
        <begin position="1"/>
        <end position="297"/>
    </location>
</feature>
<feature type="region of interest" description="Disordered" evidence="2">
    <location>
        <begin position="137"/>
        <end position="191"/>
    </location>
</feature>
<feature type="short sequence motif" description="Nuclear export signal" evidence="1">
    <location>
        <begin position="49"/>
        <end position="58"/>
    </location>
</feature>
<feature type="short sequence motif" description="Nuclear localization signal" evidence="1">
    <location>
        <begin position="211"/>
        <end position="214"/>
    </location>
</feature>
<feature type="compositionally biased region" description="Polar residues" evidence="2">
    <location>
        <begin position="146"/>
        <end position="161"/>
    </location>
</feature>
<feature type="modified residue" description="Phosphoserine; by host" evidence="1">
    <location>
        <position position="64"/>
    </location>
</feature>
<feature type="modified residue" description="Phosphoserine; by host PKC" evidence="1">
    <location>
        <position position="210"/>
    </location>
</feature>
<feature type="modified residue" description="Phosphoserine; by host PKC" evidence="1">
    <location>
        <position position="271"/>
    </location>
</feature>
<feature type="splice variant" id="VSP_026893" description="In isoform P5." evidence="3">
    <location>
        <begin position="1"/>
        <end position="82"/>
    </location>
</feature>
<feature type="splice variant" id="VSP_026894" description="In isoform P3." evidence="3">
    <location>
        <begin position="1"/>
        <end position="52"/>
    </location>
</feature>
<feature type="splice variant" id="VSP_026895" description="In isoform P2." evidence="3">
    <location>
        <begin position="1"/>
        <end position="19"/>
    </location>
</feature>
<name>PHOSP_KHUV</name>
<gene>
    <name type="primary">P</name>
</gene>
<sequence length="297" mass="33540">MSKIFVNPSAIRAGLADLEMAEETVDLINRNVEDNQAHLQGEPIEVEALPEDMRRLHISEQKHSQLSDSACGKEEGSDDDFYMADSEDPYVPMQSYLDNVGIQIVKKMKTGERFFKIWSQAVEEIISYVTVNFPLPSGKSTDDKSTQTVSERSRQNPQPSSVKKEDQLSKTKVVSQEASGPPALEWSATNDEDDASVEAEIAHQIAESFSKKYKFPSRSSGIFLYNFEQLKTNLDDIVREAKRIPGVMRLAQDGLRLPLRCILGWVASTHSKRFQILVDSDKLSKIMQDDINRYLAY</sequence>